<comment type="similarity">
    <text evidence="1">Belongs to the universal ribosomal protein uL29 family.</text>
</comment>
<name>RL29_YERPB</name>
<accession>B2K5M2</accession>
<sequence>MKAQELREKSVEELNTELLNLLREQFNLRMQAASGQLQQTHLLKQVRRNVARVKTLLTEKAGA</sequence>
<feature type="chain" id="PRO_1000121842" description="Large ribosomal subunit protein uL29">
    <location>
        <begin position="1"/>
        <end position="63"/>
    </location>
</feature>
<organism>
    <name type="scientific">Yersinia pseudotuberculosis serotype IB (strain PB1/+)</name>
    <dbReference type="NCBI Taxonomy" id="502801"/>
    <lineage>
        <taxon>Bacteria</taxon>
        <taxon>Pseudomonadati</taxon>
        <taxon>Pseudomonadota</taxon>
        <taxon>Gammaproteobacteria</taxon>
        <taxon>Enterobacterales</taxon>
        <taxon>Yersiniaceae</taxon>
        <taxon>Yersinia</taxon>
    </lineage>
</organism>
<dbReference type="EMBL" id="CP001048">
    <property type="protein sequence ID" value="ACC90831.1"/>
    <property type="molecule type" value="Genomic_DNA"/>
</dbReference>
<dbReference type="RefSeq" id="WP_002218942.1">
    <property type="nucleotide sequence ID" value="NZ_CP009780.1"/>
</dbReference>
<dbReference type="SMR" id="B2K5M2"/>
<dbReference type="GeneID" id="96663188"/>
<dbReference type="KEGG" id="ypb:YPTS_3882"/>
<dbReference type="PATRIC" id="fig|502801.10.peg.3347"/>
<dbReference type="GO" id="GO:0022625">
    <property type="term" value="C:cytosolic large ribosomal subunit"/>
    <property type="evidence" value="ECO:0007669"/>
    <property type="project" value="TreeGrafter"/>
</dbReference>
<dbReference type="GO" id="GO:0003735">
    <property type="term" value="F:structural constituent of ribosome"/>
    <property type="evidence" value="ECO:0007669"/>
    <property type="project" value="InterPro"/>
</dbReference>
<dbReference type="GO" id="GO:0006412">
    <property type="term" value="P:translation"/>
    <property type="evidence" value="ECO:0007669"/>
    <property type="project" value="UniProtKB-UniRule"/>
</dbReference>
<dbReference type="CDD" id="cd00427">
    <property type="entry name" value="Ribosomal_L29_HIP"/>
    <property type="match status" value="1"/>
</dbReference>
<dbReference type="FunFam" id="1.10.287.310:FF:000001">
    <property type="entry name" value="50S ribosomal protein L29"/>
    <property type="match status" value="1"/>
</dbReference>
<dbReference type="Gene3D" id="6.10.140.1970">
    <property type="match status" value="1"/>
</dbReference>
<dbReference type="HAMAP" id="MF_00374">
    <property type="entry name" value="Ribosomal_uL29"/>
    <property type="match status" value="1"/>
</dbReference>
<dbReference type="InterPro" id="IPR050063">
    <property type="entry name" value="Ribosomal_protein_uL29"/>
</dbReference>
<dbReference type="InterPro" id="IPR001854">
    <property type="entry name" value="Ribosomal_uL29"/>
</dbReference>
<dbReference type="InterPro" id="IPR018254">
    <property type="entry name" value="Ribosomal_uL29_CS"/>
</dbReference>
<dbReference type="InterPro" id="IPR036049">
    <property type="entry name" value="Ribosomal_uL29_sf"/>
</dbReference>
<dbReference type="NCBIfam" id="TIGR00012">
    <property type="entry name" value="L29"/>
    <property type="match status" value="1"/>
</dbReference>
<dbReference type="PANTHER" id="PTHR10916">
    <property type="entry name" value="60S RIBOSOMAL PROTEIN L35/50S RIBOSOMAL PROTEIN L29"/>
    <property type="match status" value="1"/>
</dbReference>
<dbReference type="PANTHER" id="PTHR10916:SF0">
    <property type="entry name" value="LARGE RIBOSOMAL SUBUNIT PROTEIN UL29C"/>
    <property type="match status" value="1"/>
</dbReference>
<dbReference type="Pfam" id="PF00831">
    <property type="entry name" value="Ribosomal_L29"/>
    <property type="match status" value="1"/>
</dbReference>
<dbReference type="SUPFAM" id="SSF46561">
    <property type="entry name" value="Ribosomal protein L29 (L29p)"/>
    <property type="match status" value="1"/>
</dbReference>
<dbReference type="PROSITE" id="PS00579">
    <property type="entry name" value="RIBOSOMAL_L29"/>
    <property type="match status" value="1"/>
</dbReference>
<protein>
    <recommendedName>
        <fullName evidence="1">Large ribosomal subunit protein uL29</fullName>
    </recommendedName>
    <alternativeName>
        <fullName evidence="2">50S ribosomal protein L29</fullName>
    </alternativeName>
</protein>
<evidence type="ECO:0000255" key="1">
    <source>
        <dbReference type="HAMAP-Rule" id="MF_00374"/>
    </source>
</evidence>
<evidence type="ECO:0000305" key="2"/>
<keyword id="KW-0687">Ribonucleoprotein</keyword>
<keyword id="KW-0689">Ribosomal protein</keyword>
<gene>
    <name evidence="1" type="primary">rpmC</name>
    <name type="ordered locus">YPTS_3882</name>
</gene>
<proteinExistence type="inferred from homology"/>
<reference key="1">
    <citation type="submission" date="2008-04" db="EMBL/GenBank/DDBJ databases">
        <title>Complete sequence of Yersinia pseudotuberculosis PB1/+.</title>
        <authorList>
            <person name="Copeland A."/>
            <person name="Lucas S."/>
            <person name="Lapidus A."/>
            <person name="Glavina del Rio T."/>
            <person name="Dalin E."/>
            <person name="Tice H."/>
            <person name="Bruce D."/>
            <person name="Goodwin L."/>
            <person name="Pitluck S."/>
            <person name="Munk A.C."/>
            <person name="Brettin T."/>
            <person name="Detter J.C."/>
            <person name="Han C."/>
            <person name="Tapia R."/>
            <person name="Schmutz J."/>
            <person name="Larimer F."/>
            <person name="Land M."/>
            <person name="Hauser L."/>
            <person name="Challacombe J.F."/>
            <person name="Green L."/>
            <person name="Lindler L.E."/>
            <person name="Nikolich M.P."/>
            <person name="Richardson P."/>
        </authorList>
    </citation>
    <scope>NUCLEOTIDE SEQUENCE [LARGE SCALE GENOMIC DNA]</scope>
    <source>
        <strain>PB1/+</strain>
    </source>
</reference>